<keyword id="KW-0378">Hydrolase</keyword>
<keyword id="KW-0442">Lipid degradation</keyword>
<keyword id="KW-0443">Lipid metabolism</keyword>
<keyword id="KW-0472">Membrane</keyword>
<keyword id="KW-1185">Reference proteome</keyword>
<keyword id="KW-0812">Transmembrane</keyword>
<keyword id="KW-1133">Transmembrane helix</keyword>
<accession>Q1DXR6</accession>
<accession>J3KEZ1</accession>
<gene>
    <name type="ORF">CIMG_04897</name>
</gene>
<proteinExistence type="inferred from homology"/>
<sequence length="730" mass="83048">MTANSSRRRLQMKSPRTDGDEKEEDYGLPDFHTRFINDEDLEEFEKALNAPQALSLIAINDWRPIHRRVRKPGKLPKVPQRTKDETREGVVYTLLKWPFLLFVLSWIVFLGALYILTRLYISLYEHFFAWTGQRQRLRRALHSTVDYQHWKNAAKELDEYLGNDAWKERPQYAYYDNTTVMTVVSQLRQLRAQTEAGGINGKAAAEELCTLLEGCIKTNFAGIENPRLYSETYYGTKDLVQEFIEEAHTSLRLVLTSQQLSDERKQGLFRHLDTNFGRTVLCLSGGATLAYYHFGVIKALLDNDVLPDIISGTSGGALVAALVATRTDEELKKLLVPELAHKIKACQDGITTWAVRCWRTGARFDVMQWAEQCSWFCRGSTTFREAYERTGRVLNVSCVPSDPHSPTILANYLTSPNCVIWSAVLASAAVPGILNPVVLMMKKPDGTLAPYSFGHKWKDGSLRTDIPLKALDVHFNASFSIVSQVNPHISLFFFSSRGSVGRPVTHRKGRGWRGGFLGSALEQYIKLDLNKWLKVMRHLELLPRPLGQDWSEIWLQRFSGTVTIWPKSVLSDLYYILSDPSVQRLARMLHEGQQCTFPKIKFISNRMKIERVIAEGLMKDPEWAGSGRWNNVPFRSRTDQTLPLEENAQQRSASMLADTMSHLRDTGHFREAPTSHPTGSPVRPTSGRRNSLMEEIRRQSAVFFDDTDDTMPSDDEKFPYQGQSSGTKIG</sequence>
<organism>
    <name type="scientific">Coccidioides immitis (strain RS)</name>
    <name type="common">Valley fever fungus</name>
    <dbReference type="NCBI Taxonomy" id="246410"/>
    <lineage>
        <taxon>Eukaryota</taxon>
        <taxon>Fungi</taxon>
        <taxon>Dikarya</taxon>
        <taxon>Ascomycota</taxon>
        <taxon>Pezizomycotina</taxon>
        <taxon>Eurotiomycetes</taxon>
        <taxon>Eurotiomycetidae</taxon>
        <taxon>Onygenales</taxon>
        <taxon>Onygenaceae</taxon>
        <taxon>Coccidioides</taxon>
    </lineage>
</organism>
<evidence type="ECO:0000250" key="1"/>
<evidence type="ECO:0000255" key="2"/>
<evidence type="ECO:0000255" key="3">
    <source>
        <dbReference type="PROSITE-ProRule" id="PRU01161"/>
    </source>
</evidence>
<evidence type="ECO:0000256" key="4">
    <source>
        <dbReference type="SAM" id="MobiDB-lite"/>
    </source>
</evidence>
<evidence type="ECO:0000305" key="5"/>
<name>PLPL_COCIM</name>
<comment type="function">
    <text evidence="1">Probable lipid hydrolase.</text>
</comment>
<comment type="subcellular location">
    <subcellularLocation>
        <location evidence="5">Membrane</location>
        <topology evidence="5">Single-pass membrane protein</topology>
    </subcellularLocation>
</comment>
<comment type="similarity">
    <text evidence="5">Belongs to the PLPL family.</text>
</comment>
<dbReference type="EC" id="3.1.1.-"/>
<dbReference type="EMBL" id="GG704914">
    <property type="protein sequence ID" value="EAS33873.3"/>
    <property type="molecule type" value="Genomic_DNA"/>
</dbReference>
<dbReference type="RefSeq" id="XP_001245456.1">
    <property type="nucleotide sequence ID" value="XM_001245455.2"/>
</dbReference>
<dbReference type="STRING" id="246410.Q1DXR6"/>
<dbReference type="GeneID" id="4564555"/>
<dbReference type="KEGG" id="cim:CIMG_04897"/>
<dbReference type="VEuPathDB" id="FungiDB:CIMG_04897"/>
<dbReference type="InParanoid" id="Q1DXR6"/>
<dbReference type="OMA" id="CSWFTRG"/>
<dbReference type="OrthoDB" id="15478at2759"/>
<dbReference type="Proteomes" id="UP000001261">
    <property type="component" value="Unassembled WGS sequence"/>
</dbReference>
<dbReference type="GO" id="GO:0016020">
    <property type="term" value="C:membrane"/>
    <property type="evidence" value="ECO:0007669"/>
    <property type="project" value="UniProtKB-SubCell"/>
</dbReference>
<dbReference type="GO" id="GO:0004806">
    <property type="term" value="F:triacylglycerol lipase activity"/>
    <property type="evidence" value="ECO:0007669"/>
    <property type="project" value="InterPro"/>
</dbReference>
<dbReference type="GO" id="GO:0016042">
    <property type="term" value="P:lipid catabolic process"/>
    <property type="evidence" value="ECO:0007669"/>
    <property type="project" value="UniProtKB-KW"/>
</dbReference>
<dbReference type="GO" id="GO:0006641">
    <property type="term" value="P:triglyceride metabolic process"/>
    <property type="evidence" value="ECO:0007669"/>
    <property type="project" value="UniProtKB-ARBA"/>
</dbReference>
<dbReference type="CDD" id="cd07232">
    <property type="entry name" value="Pat_PLPL"/>
    <property type="match status" value="1"/>
</dbReference>
<dbReference type="Gene3D" id="3.40.1090.10">
    <property type="entry name" value="Cytosolic phospholipase A2 catalytic domain"/>
    <property type="match status" value="2"/>
</dbReference>
<dbReference type="InterPro" id="IPR016035">
    <property type="entry name" value="Acyl_Trfase/lysoPLipase"/>
</dbReference>
<dbReference type="InterPro" id="IPR050301">
    <property type="entry name" value="NTE"/>
</dbReference>
<dbReference type="InterPro" id="IPR002641">
    <property type="entry name" value="PNPLA_dom"/>
</dbReference>
<dbReference type="InterPro" id="IPR021771">
    <property type="entry name" value="Triacylglycerol_lipase_N"/>
</dbReference>
<dbReference type="PANTHER" id="PTHR14226">
    <property type="entry name" value="NEUROPATHY TARGET ESTERASE/SWISS CHEESE D.MELANOGASTER"/>
    <property type="match status" value="1"/>
</dbReference>
<dbReference type="PANTHER" id="PTHR14226:SF66">
    <property type="entry name" value="TRIACYLGLYCEROL LIPASE PTL2"/>
    <property type="match status" value="1"/>
</dbReference>
<dbReference type="Pfam" id="PF11815">
    <property type="entry name" value="DUF3336"/>
    <property type="match status" value="1"/>
</dbReference>
<dbReference type="Pfam" id="PF01734">
    <property type="entry name" value="Patatin"/>
    <property type="match status" value="1"/>
</dbReference>
<dbReference type="SUPFAM" id="SSF52151">
    <property type="entry name" value="FabD/lysophospholipase-like"/>
    <property type="match status" value="1"/>
</dbReference>
<dbReference type="PROSITE" id="PS51635">
    <property type="entry name" value="PNPLA"/>
    <property type="match status" value="1"/>
</dbReference>
<feature type="chain" id="PRO_0000295556" description="Patatin-like phospholipase domain-containing protein CIMG_04897">
    <location>
        <begin position="1"/>
        <end position="730"/>
    </location>
</feature>
<feature type="transmembrane region" description="Helical" evidence="2">
    <location>
        <begin position="97"/>
        <end position="117"/>
    </location>
</feature>
<feature type="domain" description="PNPLA" evidence="3">
    <location>
        <begin position="281"/>
        <end position="472"/>
    </location>
</feature>
<feature type="region of interest" description="Disordered" evidence="4">
    <location>
        <begin position="1"/>
        <end position="26"/>
    </location>
</feature>
<feature type="region of interest" description="Disordered" evidence="4">
    <location>
        <begin position="667"/>
        <end position="730"/>
    </location>
</feature>
<feature type="short sequence motif" description="GXSXG" evidence="3">
    <location>
        <begin position="312"/>
        <end position="316"/>
    </location>
</feature>
<feature type="compositionally biased region" description="Basic residues" evidence="4">
    <location>
        <begin position="1"/>
        <end position="11"/>
    </location>
</feature>
<feature type="compositionally biased region" description="Polar residues" evidence="4">
    <location>
        <begin position="721"/>
        <end position="730"/>
    </location>
</feature>
<feature type="active site" description="Nucleophile" evidence="3">
    <location>
        <position position="314"/>
    </location>
</feature>
<feature type="active site" description="Proton acceptor" evidence="3">
    <location>
        <position position="459"/>
    </location>
</feature>
<protein>
    <recommendedName>
        <fullName>Patatin-like phospholipase domain-containing protein CIMG_04897</fullName>
        <ecNumber>3.1.1.-</ecNumber>
    </recommendedName>
</protein>
<reference key="1">
    <citation type="journal article" date="2009" name="Genome Res.">
        <title>Comparative genomic analyses of the human fungal pathogens Coccidioides and their relatives.</title>
        <authorList>
            <person name="Sharpton T.J."/>
            <person name="Stajich J.E."/>
            <person name="Rounsley S.D."/>
            <person name="Gardner M.J."/>
            <person name="Wortman J.R."/>
            <person name="Jordar V.S."/>
            <person name="Maiti R."/>
            <person name="Kodira C.D."/>
            <person name="Neafsey D.E."/>
            <person name="Zeng Q."/>
            <person name="Hung C.-Y."/>
            <person name="McMahan C."/>
            <person name="Muszewska A."/>
            <person name="Grynberg M."/>
            <person name="Mandel M.A."/>
            <person name="Kellner E.M."/>
            <person name="Barker B.M."/>
            <person name="Galgiani J.N."/>
            <person name="Orbach M.J."/>
            <person name="Kirkland T.N."/>
            <person name="Cole G.T."/>
            <person name="Henn M.R."/>
            <person name="Birren B.W."/>
            <person name="Taylor J.W."/>
        </authorList>
    </citation>
    <scope>NUCLEOTIDE SEQUENCE [LARGE SCALE GENOMIC DNA]</scope>
    <source>
        <strain>RS</strain>
    </source>
</reference>
<reference key="2">
    <citation type="journal article" date="2010" name="Genome Res.">
        <title>Population genomic sequencing of Coccidioides fungi reveals recent hybridization and transposon control.</title>
        <authorList>
            <person name="Neafsey D.E."/>
            <person name="Barker B.M."/>
            <person name="Sharpton T.J."/>
            <person name="Stajich J.E."/>
            <person name="Park D.J."/>
            <person name="Whiston E."/>
            <person name="Hung C.-Y."/>
            <person name="McMahan C."/>
            <person name="White J."/>
            <person name="Sykes S."/>
            <person name="Heiman D."/>
            <person name="Young S."/>
            <person name="Zeng Q."/>
            <person name="Abouelleil A."/>
            <person name="Aftuck L."/>
            <person name="Bessette D."/>
            <person name="Brown A."/>
            <person name="FitzGerald M."/>
            <person name="Lui A."/>
            <person name="Macdonald J.P."/>
            <person name="Priest M."/>
            <person name="Orbach M.J."/>
            <person name="Galgiani J.N."/>
            <person name="Kirkland T.N."/>
            <person name="Cole G.T."/>
            <person name="Birren B.W."/>
            <person name="Henn M.R."/>
            <person name="Taylor J.W."/>
            <person name="Rounsley S.D."/>
        </authorList>
    </citation>
    <scope>GENOME REANNOTATION</scope>
    <source>
        <strain>RS</strain>
    </source>
</reference>